<keyword id="KW-0134">Cell wall</keyword>
<keyword id="KW-0961">Cell wall biogenesis/degradation</keyword>
<keyword id="KW-0325">Glycoprotein</keyword>
<keyword id="KW-0326">Glycosidase</keyword>
<keyword id="KW-0378">Hydrolase</keyword>
<keyword id="KW-0964">Secreted</keyword>
<keyword id="KW-0732">Signal</keyword>
<name>BGL2_CANAX</name>
<sequence>MQIKFLTTLATVLTSVAAMGDLAFNLGVKNDDGTCKDVSTFEGDLDFLKSHSKIIKTYAVSDCNTLQNLGPAAEAEGFQIQLGIWPNDDAHFEAEKEALQNYLPKISVSTIKIFLVGSEALYREDLTASELASKINDIKGLVKGIKGKNGKSYSSVPVGTVDSWDVLVDGASKPAIDAADVVYSNSFSYWQKNSQANASYSLFDDVMQALQTLQTAKGSTDIEFWVGETGWPTDGSSYGDSVPSVENAADQWQKGICALRAWGINVAVYEAFDEAWKPDTSGTSSVEKHWGVWQSDKTLKYSIDCKFN</sequence>
<organism>
    <name type="scientific">Candida albicans</name>
    <name type="common">Yeast</name>
    <dbReference type="NCBI Taxonomy" id="5476"/>
    <lineage>
        <taxon>Eukaryota</taxon>
        <taxon>Fungi</taxon>
        <taxon>Dikarya</taxon>
        <taxon>Ascomycota</taxon>
        <taxon>Saccharomycotina</taxon>
        <taxon>Pichiomycetes</taxon>
        <taxon>Debaryomycetaceae</taxon>
        <taxon>Candida/Lodderomyces clade</taxon>
        <taxon>Candida</taxon>
    </lineage>
</organism>
<proteinExistence type="inferred from homology"/>
<feature type="signal peptide" evidence="2">
    <location>
        <begin position="1"/>
        <end position="18"/>
    </location>
</feature>
<feature type="chain" id="PRO_0000011894" description="Glucan 1,3-beta-glucosidase">
    <location>
        <begin position="19"/>
        <end position="308"/>
    </location>
</feature>
<feature type="active site" description="Proton donor" evidence="1">
    <location>
        <position position="119"/>
    </location>
</feature>
<feature type="active site" description="Nucleophile" evidence="1">
    <location>
        <position position="228"/>
    </location>
</feature>
<feature type="glycosylation site" description="N-linked (GlcNAc...) asparagine" evidence="2">
    <location>
        <position position="197"/>
    </location>
</feature>
<comment type="catalytic activity">
    <reaction>
        <text>Successive hydrolysis of beta-D-glucose units from the non-reducing ends of (1-&gt;3)-beta-D-glucans, releasing alpha-glucose.</text>
        <dbReference type="EC" id="3.2.1.58"/>
    </reaction>
</comment>
<comment type="subcellular location">
    <subcellularLocation>
        <location>Secreted</location>
        <location>Cell wall</location>
    </subcellularLocation>
    <text>Tightly bound to cell wall.</text>
</comment>
<comment type="similarity">
    <text evidence="3">Belongs to the glycosyl hydrolase 17 family.</text>
</comment>
<reference key="1">
    <citation type="submission" date="1994-08" db="EMBL/GenBank/DDBJ databases">
        <title>The glucanosyl transferase (BGL2) of Candida albicans.</title>
        <authorList>
            <person name="Scadden A.D."/>
            <person name="Sullivan P.A."/>
        </authorList>
    </citation>
    <scope>NUCLEOTIDE SEQUENCE [GENOMIC DNA]</scope>
    <source>
        <strain>ATCC 10261 / CBS 2718 / NBRC 1061 / FMJ 1011</strain>
    </source>
</reference>
<evidence type="ECO:0000250" key="1">
    <source>
        <dbReference type="UniProtKB" id="O22317"/>
    </source>
</evidence>
<evidence type="ECO:0000255" key="2"/>
<evidence type="ECO:0000305" key="3"/>
<dbReference type="EC" id="3.2.1.58"/>
<dbReference type="EMBL" id="U12975">
    <property type="protein sequence ID" value="AAA21151.1"/>
    <property type="molecule type" value="Genomic_DNA"/>
</dbReference>
<dbReference type="SMR" id="P43070"/>
<dbReference type="CAZy" id="GH17">
    <property type="family name" value="Glycoside Hydrolase Family 17"/>
</dbReference>
<dbReference type="GlyCosmos" id="P43070">
    <property type="glycosylation" value="1 site, No reported glycans"/>
</dbReference>
<dbReference type="VEuPathDB" id="FungiDB:C4_02250C_A"/>
<dbReference type="VEuPathDB" id="FungiDB:CAWG_03569"/>
<dbReference type="PHI-base" id="PHI:61"/>
<dbReference type="GO" id="GO:0009986">
    <property type="term" value="C:cell surface"/>
    <property type="evidence" value="ECO:0007669"/>
    <property type="project" value="TreeGrafter"/>
</dbReference>
<dbReference type="GO" id="GO:0005576">
    <property type="term" value="C:extracellular region"/>
    <property type="evidence" value="ECO:0007669"/>
    <property type="project" value="UniProtKB-KW"/>
</dbReference>
<dbReference type="GO" id="GO:0009277">
    <property type="term" value="C:fungal-type cell wall"/>
    <property type="evidence" value="ECO:0007669"/>
    <property type="project" value="EnsemblFungi"/>
</dbReference>
<dbReference type="GO" id="GO:0042973">
    <property type="term" value="F:glucan endo-1,3-beta-D-glucosidase activity"/>
    <property type="evidence" value="ECO:0007669"/>
    <property type="project" value="EnsemblFungi"/>
</dbReference>
<dbReference type="GO" id="GO:0004338">
    <property type="term" value="F:glucan exo-1,3-beta-glucosidase activity"/>
    <property type="evidence" value="ECO:0007669"/>
    <property type="project" value="UniProtKB-EC"/>
</dbReference>
<dbReference type="GO" id="GO:0005975">
    <property type="term" value="P:carbohydrate metabolic process"/>
    <property type="evidence" value="ECO:0007669"/>
    <property type="project" value="InterPro"/>
</dbReference>
<dbReference type="GO" id="GO:0031505">
    <property type="term" value="P:fungal-type cell wall organization"/>
    <property type="evidence" value="ECO:0007669"/>
    <property type="project" value="EnsemblFungi"/>
</dbReference>
<dbReference type="FunFam" id="3.20.20.80:FF:000105">
    <property type="entry name" value="Glucan 1,3-beta-glucosidase"/>
    <property type="match status" value="1"/>
</dbReference>
<dbReference type="Gene3D" id="3.20.20.80">
    <property type="entry name" value="Glycosidases"/>
    <property type="match status" value="1"/>
</dbReference>
<dbReference type="InterPro" id="IPR050732">
    <property type="entry name" value="Beta-glucan_modifiers"/>
</dbReference>
<dbReference type="InterPro" id="IPR000490">
    <property type="entry name" value="Glyco_hydro_17"/>
</dbReference>
<dbReference type="InterPro" id="IPR017853">
    <property type="entry name" value="Glycoside_hydrolase_SF"/>
</dbReference>
<dbReference type="PANTHER" id="PTHR16631">
    <property type="entry name" value="GLUCAN 1,3-BETA-GLUCOSIDASE"/>
    <property type="match status" value="1"/>
</dbReference>
<dbReference type="PANTHER" id="PTHR16631:SF26">
    <property type="entry name" value="GLUCAN 1,3-BETA-GLUCOSIDASE"/>
    <property type="match status" value="1"/>
</dbReference>
<dbReference type="Pfam" id="PF00332">
    <property type="entry name" value="Glyco_hydro_17"/>
    <property type="match status" value="1"/>
</dbReference>
<dbReference type="SUPFAM" id="SSF51445">
    <property type="entry name" value="(Trans)glycosidases"/>
    <property type="match status" value="1"/>
</dbReference>
<dbReference type="PROSITE" id="PS00587">
    <property type="entry name" value="GLYCOSYL_HYDROL_F17"/>
    <property type="match status" value="1"/>
</dbReference>
<gene>
    <name type="primary">BGL2</name>
</gene>
<accession>P43070</accession>
<protein>
    <recommendedName>
        <fullName>Glucan 1,3-beta-glucosidase</fullName>
        <ecNumber>3.2.1.58</ecNumber>
    </recommendedName>
    <alternativeName>
        <fullName>Exo-1,3-beta-glucanase</fullName>
    </alternativeName>
</protein>